<reference key="1">
    <citation type="journal article" date="1981" name="Proc. Natl. Acad. Sci. U.S.A.">
        <title>Multiple differences between the nucleic acid sequences of the IgG2aa and IgG2ab alleles of the mouse.</title>
        <authorList>
            <person name="Schreier P.H."/>
            <person name="Bothwell A.L.M."/>
            <person name="Mueller-Hill B."/>
            <person name="Baltimore D."/>
        </authorList>
    </citation>
    <scope>NUCLEOTIDE SEQUENCE [GENOMIC DNA]</scope>
    <source>
        <strain>C57BL/6J</strain>
    </source>
</reference>
<reference key="2">
    <citation type="journal article" date="1981" name="Proc. Natl. Acad. Sci. U.S.A.">
        <title>Multiple amino acid substitutions between murine gamma 2a heavy chain Fc regions of Ig1a and Ig1b allotypic forms.</title>
        <authorList>
            <person name="Dognin M.J."/>
            <person name="Lauwereys M."/>
            <person name="Strosberg A.D."/>
        </authorList>
    </citation>
    <scope>PROTEIN SEQUENCE</scope>
</reference>
<reference key="3">
    <citation type="journal article" date="2007" name="J. Proteome Res.">
        <title>Enhanced analysis of the mouse plasma proteome using cysteine-containing tryptic glycopeptides.</title>
        <authorList>
            <person name="Bernhard O.K."/>
            <person name="Kapp E.A."/>
            <person name="Simpson R.J."/>
        </authorList>
    </citation>
    <scope>GLYCOSYLATION [LARGE SCALE ANALYSIS] AT ASN-185</scope>
    <source>
        <strain>C57BL/6J</strain>
        <tissue>Plasma</tissue>
    </source>
</reference>
<name>GCAB_MOUSE</name>
<dbReference type="EMBL" id="J00479">
    <property type="status" value="NOT_ANNOTATED_CDS"/>
    <property type="molecule type" value="Genomic_DNA"/>
</dbReference>
<dbReference type="PIR" id="A02153">
    <property type="entry name" value="G2MSAB"/>
</dbReference>
<dbReference type="PDB" id="1BOG">
    <property type="method" value="X-ray"/>
    <property type="resolution" value="2.60 A"/>
    <property type="chains" value="B=1-101"/>
</dbReference>
<dbReference type="PDB" id="1CFN">
    <property type="method" value="X-ray"/>
    <property type="resolution" value="2.65 A"/>
    <property type="chains" value="B=1-101"/>
</dbReference>
<dbReference type="PDB" id="1CFQ">
    <property type="method" value="X-ray"/>
    <property type="resolution" value="2.80 A"/>
    <property type="chains" value="B=1-101"/>
</dbReference>
<dbReference type="PDB" id="1CFS">
    <property type="method" value="X-ray"/>
    <property type="resolution" value="2.75 A"/>
    <property type="chains" value="B=1-101"/>
</dbReference>
<dbReference type="PDB" id="1CFT">
    <property type="method" value="X-ray"/>
    <property type="resolution" value="2.80 A"/>
    <property type="chains" value="B=1-101"/>
</dbReference>
<dbReference type="PDB" id="1HH6">
    <property type="method" value="X-ray"/>
    <property type="resolution" value="2.60 A"/>
    <property type="chains" value="B=1-101"/>
</dbReference>
<dbReference type="PDB" id="1HH9">
    <property type="method" value="X-ray"/>
    <property type="resolution" value="2.70 A"/>
    <property type="chains" value="B=1-101"/>
</dbReference>
<dbReference type="PDB" id="1HI6">
    <property type="method" value="X-ray"/>
    <property type="resolution" value="2.55 A"/>
    <property type="chains" value="B=1-101"/>
</dbReference>
<dbReference type="PDB" id="2IPT">
    <property type="method" value="X-ray"/>
    <property type="resolution" value="2.00 A"/>
    <property type="chains" value="H=1-100"/>
</dbReference>
<dbReference type="PDB" id="2IQ9">
    <property type="method" value="X-ray"/>
    <property type="resolution" value="2.30 A"/>
    <property type="chains" value="H=1-100"/>
</dbReference>
<dbReference type="PDB" id="2IQA">
    <property type="method" value="X-ray"/>
    <property type="resolution" value="2.00 A"/>
    <property type="chains" value="B/H=1-100"/>
</dbReference>
<dbReference type="PDB" id="2VWE">
    <property type="method" value="X-ray"/>
    <property type="resolution" value="3.40 A"/>
    <property type="chains" value="E/L=1-99"/>
</dbReference>
<dbReference type="PDBsum" id="1BOG"/>
<dbReference type="PDBsum" id="1CFN"/>
<dbReference type="PDBsum" id="1CFQ"/>
<dbReference type="PDBsum" id="1CFS"/>
<dbReference type="PDBsum" id="1CFT"/>
<dbReference type="PDBsum" id="1HH6"/>
<dbReference type="PDBsum" id="1HH9"/>
<dbReference type="PDBsum" id="1HI6"/>
<dbReference type="PDBsum" id="2IPT"/>
<dbReference type="PDBsum" id="2IQ9"/>
<dbReference type="PDBsum" id="2IQA"/>
<dbReference type="PDBsum" id="2VWE"/>
<dbReference type="SMR" id="P01864"/>
<dbReference type="FunCoup" id="P01864">
    <property type="interactions" value="1"/>
</dbReference>
<dbReference type="MINT" id="P01864"/>
<dbReference type="GlyGen" id="P01864">
    <property type="glycosylation" value="2 sites, 1 O-linked glycan (1 site)"/>
</dbReference>
<dbReference type="iPTMnet" id="P01864"/>
<dbReference type="SwissPalm" id="P01864"/>
<dbReference type="jPOST" id="P01864"/>
<dbReference type="PaxDb" id="10090-ENSMUSP00000100212"/>
<dbReference type="PeptideAtlas" id="P01864"/>
<dbReference type="ABCD" id="P01864">
    <property type="antibodies" value="22 sequenced antibodies"/>
</dbReference>
<dbReference type="UCSC" id="uc007pgl.2">
    <molecule id="P01864-1"/>
    <property type="organism name" value="mouse"/>
</dbReference>
<dbReference type="eggNOG" id="ENOG502R54U">
    <property type="taxonomic scope" value="Eukaryota"/>
</dbReference>
<dbReference type="InParanoid" id="P01864"/>
<dbReference type="PhylomeDB" id="P01864"/>
<dbReference type="EvolutionaryTrace" id="P01864"/>
<dbReference type="Proteomes" id="UP000000589">
    <property type="component" value="Unplaced"/>
</dbReference>
<dbReference type="RNAct" id="P01864">
    <property type="molecule type" value="protein"/>
</dbReference>
<dbReference type="GO" id="GO:0042571">
    <property type="term" value="C:immunoglobulin complex, circulating"/>
    <property type="evidence" value="ECO:0000318"/>
    <property type="project" value="GO_Central"/>
</dbReference>
<dbReference type="GO" id="GO:0003823">
    <property type="term" value="F:antigen binding"/>
    <property type="evidence" value="ECO:0000318"/>
    <property type="project" value="GO_Central"/>
</dbReference>
<dbReference type="GO" id="GO:0034987">
    <property type="term" value="F:immunoglobulin receptor binding"/>
    <property type="evidence" value="ECO:0000318"/>
    <property type="project" value="GO_Central"/>
</dbReference>
<dbReference type="GO" id="GO:0019731">
    <property type="term" value="P:antibacterial humoral response"/>
    <property type="evidence" value="ECO:0000318"/>
    <property type="project" value="GO_Central"/>
</dbReference>
<dbReference type="GO" id="GO:0006958">
    <property type="term" value="P:complement activation, classical pathway"/>
    <property type="evidence" value="ECO:0000318"/>
    <property type="project" value="GO_Central"/>
</dbReference>
<dbReference type="CDD" id="cd21817">
    <property type="entry name" value="IgC1_CH1_IgEG"/>
    <property type="match status" value="1"/>
</dbReference>
<dbReference type="CDD" id="cd05768">
    <property type="entry name" value="IgC1_CH3_IgAGD_CH4_IgAEM"/>
    <property type="match status" value="1"/>
</dbReference>
<dbReference type="FunFam" id="2.60.40.10:FF:001739">
    <property type="entry name" value="Ig gamma-2A chain C region"/>
    <property type="match status" value="1"/>
</dbReference>
<dbReference type="FunFam" id="2.60.40.10:FF:000463">
    <property type="entry name" value="Immunoglobulin heavy constant gamma 1"/>
    <property type="match status" value="1"/>
</dbReference>
<dbReference type="FunFam" id="2.60.40.10:FF:001129">
    <property type="entry name" value="Immunoglobulin heavy constant gamma 1"/>
    <property type="match status" value="1"/>
</dbReference>
<dbReference type="Gene3D" id="2.60.40.10">
    <property type="entry name" value="Immunoglobulins"/>
    <property type="match status" value="3"/>
</dbReference>
<dbReference type="InterPro" id="IPR007110">
    <property type="entry name" value="Ig-like_dom"/>
</dbReference>
<dbReference type="InterPro" id="IPR036179">
    <property type="entry name" value="Ig-like_dom_sf"/>
</dbReference>
<dbReference type="InterPro" id="IPR013783">
    <property type="entry name" value="Ig-like_fold"/>
</dbReference>
<dbReference type="InterPro" id="IPR003006">
    <property type="entry name" value="Ig/MHC_CS"/>
</dbReference>
<dbReference type="InterPro" id="IPR003597">
    <property type="entry name" value="Ig_C1-set"/>
</dbReference>
<dbReference type="InterPro" id="IPR050380">
    <property type="entry name" value="Immune_Resp_Modulators"/>
</dbReference>
<dbReference type="PANTHER" id="PTHR23411">
    <property type="entry name" value="TAPASIN"/>
    <property type="match status" value="1"/>
</dbReference>
<dbReference type="Pfam" id="PF07654">
    <property type="entry name" value="C1-set"/>
    <property type="match status" value="3"/>
</dbReference>
<dbReference type="SMART" id="SM00407">
    <property type="entry name" value="IGc1"/>
    <property type="match status" value="3"/>
</dbReference>
<dbReference type="SUPFAM" id="SSF48726">
    <property type="entry name" value="Immunoglobulin"/>
    <property type="match status" value="3"/>
</dbReference>
<dbReference type="PROSITE" id="PS50835">
    <property type="entry name" value="IG_LIKE"/>
    <property type="match status" value="3"/>
</dbReference>
<dbReference type="PROSITE" id="PS00290">
    <property type="entry name" value="IG_MHC"/>
    <property type="match status" value="1"/>
</dbReference>
<keyword id="KW-0002">3D-structure</keyword>
<keyword id="KW-0025">Alternative splicing</keyword>
<keyword id="KW-0903">Direct protein sequencing</keyword>
<keyword id="KW-0325">Glycoprotein</keyword>
<keyword id="KW-0393">Immunoglobulin domain</keyword>
<keyword id="KW-1185">Reference proteome</keyword>
<keyword id="KW-0677">Repeat</keyword>
<keyword id="KW-0964">Secreted</keyword>
<evidence type="ECO:0000269" key="1">
    <source>
    </source>
</evidence>
<evidence type="ECO:0000305" key="2"/>
<evidence type="ECO:0007829" key="3">
    <source>
        <dbReference type="PDB" id="1HI6"/>
    </source>
</evidence>
<feature type="chain" id="PRO_0000153585" description="Ig gamma-2A chain C region secreted form">
    <location>
        <begin position="1" status="less than"/>
        <end position="335"/>
    </location>
</feature>
<feature type="domain" description="Ig-like 1">
    <location>
        <begin position="6"/>
        <end position="98"/>
    </location>
</feature>
<feature type="domain" description="Ig-like 2">
    <location>
        <begin position="126"/>
        <end position="225"/>
    </location>
</feature>
<feature type="domain" description="Ig-like 3">
    <location>
        <begin position="234"/>
        <end position="330"/>
    </location>
</feature>
<feature type="glycosylation site" description="N-linked (GlcNAc...) asparagine" evidence="1">
    <location>
        <position position="185"/>
    </location>
</feature>
<feature type="non-terminal residue">
    <location>
        <position position="1"/>
    </location>
</feature>
<feature type="strand" evidence="3">
    <location>
        <begin position="7"/>
        <end position="11"/>
    </location>
</feature>
<feature type="strand" evidence="3">
    <location>
        <begin position="14"/>
        <end position="16"/>
    </location>
</feature>
<feature type="strand" evidence="3">
    <location>
        <begin position="20"/>
        <end position="35"/>
    </location>
</feature>
<feature type="strand" evidence="3">
    <location>
        <begin position="38"/>
        <end position="41"/>
    </location>
</feature>
<feature type="turn" evidence="3">
    <location>
        <begin position="42"/>
        <end position="45"/>
    </location>
</feature>
<feature type="strand" evidence="3">
    <location>
        <begin position="50"/>
        <end position="52"/>
    </location>
</feature>
<feature type="strand" evidence="3">
    <location>
        <begin position="56"/>
        <end position="58"/>
    </location>
</feature>
<feature type="strand" evidence="3">
    <location>
        <begin position="61"/>
        <end position="71"/>
    </location>
</feature>
<feature type="helix" evidence="3">
    <location>
        <begin position="72"/>
        <end position="74"/>
    </location>
</feature>
<feature type="turn" evidence="3">
    <location>
        <begin position="75"/>
        <end position="77"/>
    </location>
</feature>
<feature type="strand" evidence="3">
    <location>
        <begin position="81"/>
        <end position="86"/>
    </location>
</feature>
<feature type="helix" evidence="3">
    <location>
        <begin position="87"/>
        <end position="89"/>
    </location>
</feature>
<feature type="strand" evidence="3">
    <location>
        <begin position="91"/>
        <end position="96"/>
    </location>
</feature>
<accession>P01864</accession>
<protein>
    <recommendedName>
        <fullName>Ig gamma-2A chain C region secreted form</fullName>
    </recommendedName>
    <alternativeName>
        <fullName>B allele</fullName>
    </alternativeName>
</protein>
<organism>
    <name type="scientific">Mus musculus</name>
    <name type="common">Mouse</name>
    <dbReference type="NCBI Taxonomy" id="10090"/>
    <lineage>
        <taxon>Eukaryota</taxon>
        <taxon>Metazoa</taxon>
        <taxon>Chordata</taxon>
        <taxon>Craniata</taxon>
        <taxon>Vertebrata</taxon>
        <taxon>Euteleostomi</taxon>
        <taxon>Mammalia</taxon>
        <taxon>Eutheria</taxon>
        <taxon>Euarchontoglires</taxon>
        <taxon>Glires</taxon>
        <taxon>Rodentia</taxon>
        <taxon>Myomorpha</taxon>
        <taxon>Muroidea</taxon>
        <taxon>Muridae</taxon>
        <taxon>Murinae</taxon>
        <taxon>Mus</taxon>
        <taxon>Mus</taxon>
    </lineage>
</organism>
<comment type="subcellular location">
    <molecule>Isoform Secreted</molecule>
    <subcellularLocation>
        <location evidence="2">Secreted</location>
    </subcellularLocation>
</comment>
<comment type="alternative products">
    <event type="alternative splicing"/>
    <isoform>
        <id>P01864-1</id>
        <name>Secreted</name>
        <sequence type="displayed"/>
    </isoform>
    <isoform>
        <id>P01865-1</id>
        <name>Membrane-bound</name>
        <sequence type="external"/>
    </isoform>
</comment>
<comment type="miscellaneous">
    <text>The sequence differs from that of the a allele, from BALB/c mice, at 15% of the positions.</text>
</comment>
<comment type="miscellaneous">
    <molecule>Isoform Secreted</molecule>
    <text>Probably the major isoform.</text>
</comment>
<proteinExistence type="evidence at protein level"/>
<sequence length="335" mass="36596">AKTTAPSVYPLVPVCGGTTGSSVTLGCLVKGYFPEPVTLTWNSGSLSSGVHTFPALLQSGLYTLSSSVTVTSNTWPSQTITCNVAHPASSTKVDKKIEPRVPITQNPCPPHQRVPPCAAPDLLGGPSVFIFPPKIKDVLMISLSPMVTCVVVDVSEDDPDVQISWFVNNVEVHTAQTQTHREDYNSTLRVVSALPIQHQDWMSGKEFKCKVNNRALPSPIEKTISKPRGPVRAPQVYVLPPPAEEMTKKEFSLTCMITGFLPAEIAVDWTSNGRTEQNYKNTATVLDSDGSYFMYSKLRVQKSTWERGSLFACSVVHEVLHNHLTTKTISRSLGK</sequence>